<name>NSYB_DROME</name>
<organism>
    <name type="scientific">Drosophila melanogaster</name>
    <name type="common">Fruit fly</name>
    <dbReference type="NCBI Taxonomy" id="7227"/>
    <lineage>
        <taxon>Eukaryota</taxon>
        <taxon>Metazoa</taxon>
        <taxon>Ecdysozoa</taxon>
        <taxon>Arthropoda</taxon>
        <taxon>Hexapoda</taxon>
        <taxon>Insecta</taxon>
        <taxon>Pterygota</taxon>
        <taxon>Neoptera</taxon>
        <taxon>Endopterygota</taxon>
        <taxon>Diptera</taxon>
        <taxon>Brachycera</taxon>
        <taxon>Muscomorpha</taxon>
        <taxon>Ephydroidea</taxon>
        <taxon>Drosophilidae</taxon>
        <taxon>Drosophila</taxon>
        <taxon>Sophophora</taxon>
    </lineage>
</organism>
<comment type="function">
    <text evidence="5 6 8">Involved in the targeting and/or fusion of transport vesicles to their target membrane (PubMed:12364587, PubMed:22270918). Major SNARE protein of synaptic vesicles which mediates fusion of synaptic vesicles to release neurotransmitters (PubMed:12364587, PubMed:9482790). Essential for fast vesicular exocytosis and activity-dependent neurotransmitter release as well as fast endocytosis that mediates rapid reuse of synaptic vesicles (PubMed:12364587). Also involved in a neuron-specific sort-and-degrade mechanism that promotes endolysosomal degradation and is required for neuronal maintenance (PubMed:22270918).</text>
</comment>
<comment type="subunit">
    <text evidence="5">Part of the SNARE core complex containing Snap25 and syntaxin.</text>
</comment>
<comment type="subcellular location">
    <subcellularLocation>
        <location evidence="6 11">Cytoplasmic vesicle</location>
        <location evidence="6 11">Secretory vesicle</location>
        <location evidence="6 11">Synaptic vesicle membrane</location>
        <topology evidence="1">Single-pass type IV membrane protein</topology>
    </subcellularLocation>
    <subcellularLocation>
        <location evidence="6">Early endosome membrane</location>
        <topology evidence="1">Single-pass type IV membrane protein</topology>
    </subcellularLocation>
    <text evidence="6">Localizes to synaptic vesicles and to a subset of early endosomal compartments, predominantly at synapses.</text>
</comment>
<comment type="alternative products">
    <event type="alternative splicing"/>
    <isoform>
        <id>Q9W0C1-1</id>
        <name>A</name>
        <name>F</name>
        <sequence type="displayed"/>
    </isoform>
    <isoform>
        <id>Q9W0C1-2</id>
        <name>J</name>
        <sequence type="described" ref="VSP_061566 VSP_061571"/>
    </isoform>
    <isoform>
        <id>Q9W0C1-3</id>
        <name>E</name>
        <name>G</name>
        <sequence type="described" ref="VSP_061565"/>
    </isoform>
    <isoform>
        <id>Q9W0C1-4</id>
        <name>H</name>
        <name>I</name>
        <sequence type="described" ref="VSP_061565 VSP_061567 VSP_061570"/>
    </isoform>
    <isoform>
        <id>Q9W0C1-5</id>
        <name>K</name>
        <sequence type="described" ref="VSP_061568 VSP_061569"/>
    </isoform>
</comment>
<comment type="tissue specificity">
    <text evidence="7">Specifically expressed in neurons and synapses.</text>
</comment>
<comment type="developmental stage">
    <text evidence="7">Transcripts are first detectable at stage 13 or 14 (PubMed:8229205). The expression is restricted to the nervous system, becoming quite robust in both the central and peripheral nervous system (CNS and PNS, respectively) by late embryogenesis (PubMed:8229205).</text>
</comment>
<comment type="disruption phenotype">
    <text evidence="4 6 8">Embryos develop normally, but their nerve terminals do not release transmitter in response to an action potential (PubMed:9482790). Spontaneous neurotransmitter release is reduced, but not abolished (PubMed:10460261, PubMed:9482790). Slow degeneration in adult photoreceptor neurons is also observed: defects are caused by an accumulation of endosomal vesicles, leading to transmembrane protein degradation defects and a secondary increase in autophagy (PubMed:22270918).</text>
</comment>
<comment type="similarity">
    <text evidence="10">Belongs to the synaptobrevin family.</text>
</comment>
<reference key="1">
    <citation type="journal article" date="2000" name="Science">
        <title>The genome sequence of Drosophila melanogaster.</title>
        <authorList>
            <person name="Adams M.D."/>
            <person name="Celniker S.E."/>
            <person name="Holt R.A."/>
            <person name="Evans C.A."/>
            <person name="Gocayne J.D."/>
            <person name="Amanatides P.G."/>
            <person name="Scherer S.E."/>
            <person name="Li P.W."/>
            <person name="Hoskins R.A."/>
            <person name="Galle R.F."/>
            <person name="George R.A."/>
            <person name="Lewis S.E."/>
            <person name="Richards S."/>
            <person name="Ashburner M."/>
            <person name="Henderson S.N."/>
            <person name="Sutton G.G."/>
            <person name="Wortman J.R."/>
            <person name="Yandell M.D."/>
            <person name="Zhang Q."/>
            <person name="Chen L.X."/>
            <person name="Brandon R.C."/>
            <person name="Rogers Y.-H.C."/>
            <person name="Blazej R.G."/>
            <person name="Champe M."/>
            <person name="Pfeiffer B.D."/>
            <person name="Wan K.H."/>
            <person name="Doyle C."/>
            <person name="Baxter E.G."/>
            <person name="Helt G."/>
            <person name="Nelson C.R."/>
            <person name="Miklos G.L.G."/>
            <person name="Abril J.F."/>
            <person name="Agbayani A."/>
            <person name="An H.-J."/>
            <person name="Andrews-Pfannkoch C."/>
            <person name="Baldwin D."/>
            <person name="Ballew R.M."/>
            <person name="Basu A."/>
            <person name="Baxendale J."/>
            <person name="Bayraktaroglu L."/>
            <person name="Beasley E.M."/>
            <person name="Beeson K.Y."/>
            <person name="Benos P.V."/>
            <person name="Berman B.P."/>
            <person name="Bhandari D."/>
            <person name="Bolshakov S."/>
            <person name="Borkova D."/>
            <person name="Botchan M.R."/>
            <person name="Bouck J."/>
            <person name="Brokstein P."/>
            <person name="Brottier P."/>
            <person name="Burtis K.C."/>
            <person name="Busam D.A."/>
            <person name="Butler H."/>
            <person name="Cadieu E."/>
            <person name="Center A."/>
            <person name="Chandra I."/>
            <person name="Cherry J.M."/>
            <person name="Cawley S."/>
            <person name="Dahlke C."/>
            <person name="Davenport L.B."/>
            <person name="Davies P."/>
            <person name="de Pablos B."/>
            <person name="Delcher A."/>
            <person name="Deng Z."/>
            <person name="Mays A.D."/>
            <person name="Dew I."/>
            <person name="Dietz S.M."/>
            <person name="Dodson K."/>
            <person name="Doup L.E."/>
            <person name="Downes M."/>
            <person name="Dugan-Rocha S."/>
            <person name="Dunkov B.C."/>
            <person name="Dunn P."/>
            <person name="Durbin K.J."/>
            <person name="Evangelista C.C."/>
            <person name="Ferraz C."/>
            <person name="Ferriera S."/>
            <person name="Fleischmann W."/>
            <person name="Fosler C."/>
            <person name="Gabrielian A.E."/>
            <person name="Garg N.S."/>
            <person name="Gelbart W.M."/>
            <person name="Glasser K."/>
            <person name="Glodek A."/>
            <person name="Gong F."/>
            <person name="Gorrell J.H."/>
            <person name="Gu Z."/>
            <person name="Guan P."/>
            <person name="Harris M."/>
            <person name="Harris N.L."/>
            <person name="Harvey D.A."/>
            <person name="Heiman T.J."/>
            <person name="Hernandez J.R."/>
            <person name="Houck J."/>
            <person name="Hostin D."/>
            <person name="Houston K.A."/>
            <person name="Howland T.J."/>
            <person name="Wei M.-H."/>
            <person name="Ibegwam C."/>
            <person name="Jalali M."/>
            <person name="Kalush F."/>
            <person name="Karpen G.H."/>
            <person name="Ke Z."/>
            <person name="Kennison J.A."/>
            <person name="Ketchum K.A."/>
            <person name="Kimmel B.E."/>
            <person name="Kodira C.D."/>
            <person name="Kraft C.L."/>
            <person name="Kravitz S."/>
            <person name="Kulp D."/>
            <person name="Lai Z."/>
            <person name="Lasko P."/>
            <person name="Lei Y."/>
            <person name="Levitsky A.A."/>
            <person name="Li J.H."/>
            <person name="Li Z."/>
            <person name="Liang Y."/>
            <person name="Lin X."/>
            <person name="Liu X."/>
            <person name="Mattei B."/>
            <person name="McIntosh T.C."/>
            <person name="McLeod M.P."/>
            <person name="McPherson D."/>
            <person name="Merkulov G."/>
            <person name="Milshina N.V."/>
            <person name="Mobarry C."/>
            <person name="Morris J."/>
            <person name="Moshrefi A."/>
            <person name="Mount S.M."/>
            <person name="Moy M."/>
            <person name="Murphy B."/>
            <person name="Murphy L."/>
            <person name="Muzny D.M."/>
            <person name="Nelson D.L."/>
            <person name="Nelson D.R."/>
            <person name="Nelson K.A."/>
            <person name="Nixon K."/>
            <person name="Nusskern D.R."/>
            <person name="Pacleb J.M."/>
            <person name="Palazzolo M."/>
            <person name="Pittman G.S."/>
            <person name="Pan S."/>
            <person name="Pollard J."/>
            <person name="Puri V."/>
            <person name="Reese M.G."/>
            <person name="Reinert K."/>
            <person name="Remington K."/>
            <person name="Saunders R.D.C."/>
            <person name="Scheeler F."/>
            <person name="Shen H."/>
            <person name="Shue B.C."/>
            <person name="Siden-Kiamos I."/>
            <person name="Simpson M."/>
            <person name="Skupski M.P."/>
            <person name="Smith T.J."/>
            <person name="Spier E."/>
            <person name="Spradling A.C."/>
            <person name="Stapleton M."/>
            <person name="Strong R."/>
            <person name="Sun E."/>
            <person name="Svirskas R."/>
            <person name="Tector C."/>
            <person name="Turner R."/>
            <person name="Venter E."/>
            <person name="Wang A.H."/>
            <person name="Wang X."/>
            <person name="Wang Z.-Y."/>
            <person name="Wassarman D.A."/>
            <person name="Weinstock G.M."/>
            <person name="Weissenbach J."/>
            <person name="Williams S.M."/>
            <person name="Woodage T."/>
            <person name="Worley K.C."/>
            <person name="Wu D."/>
            <person name="Yang S."/>
            <person name="Yao Q.A."/>
            <person name="Ye J."/>
            <person name="Yeh R.-F."/>
            <person name="Zaveri J.S."/>
            <person name="Zhan M."/>
            <person name="Zhang G."/>
            <person name="Zhao Q."/>
            <person name="Zheng L."/>
            <person name="Zheng X.H."/>
            <person name="Zhong F.N."/>
            <person name="Zhong W."/>
            <person name="Zhou X."/>
            <person name="Zhu S.C."/>
            <person name="Zhu X."/>
            <person name="Smith H.O."/>
            <person name="Gibbs R.A."/>
            <person name="Myers E.W."/>
            <person name="Rubin G.M."/>
            <person name="Venter J.C."/>
        </authorList>
    </citation>
    <scope>NUCLEOTIDE SEQUENCE [LARGE SCALE GENOMIC DNA]</scope>
    <source>
        <strain>Berkeley</strain>
    </source>
</reference>
<reference key="2">
    <citation type="journal article" date="2002" name="Genome Biol.">
        <title>Annotation of the Drosophila melanogaster euchromatic genome: a systematic review.</title>
        <authorList>
            <person name="Misra S."/>
            <person name="Crosby M.A."/>
            <person name="Mungall C.J."/>
            <person name="Matthews B.B."/>
            <person name="Campbell K.S."/>
            <person name="Hradecky P."/>
            <person name="Huang Y."/>
            <person name="Kaminker J.S."/>
            <person name="Millburn G.H."/>
            <person name="Prochnik S.E."/>
            <person name="Smith C.D."/>
            <person name="Tupy J.L."/>
            <person name="Whitfield E.J."/>
            <person name="Bayraktaroglu L."/>
            <person name="Berman B.P."/>
            <person name="Bettencourt B.R."/>
            <person name="Celniker S.E."/>
            <person name="de Grey A.D.N.J."/>
            <person name="Drysdale R.A."/>
            <person name="Harris N.L."/>
            <person name="Richter J."/>
            <person name="Russo S."/>
            <person name="Schroeder A.J."/>
            <person name="Shu S.Q."/>
            <person name="Stapleton M."/>
            <person name="Yamada C."/>
            <person name="Ashburner M."/>
            <person name="Gelbart W.M."/>
            <person name="Rubin G.M."/>
            <person name="Lewis S.E."/>
        </authorList>
    </citation>
    <scope>GENOME REANNOTATION</scope>
    <source>
        <strain>Berkeley</strain>
    </source>
</reference>
<reference key="3">
    <citation type="submission" date="2003-02" db="EMBL/GenBank/DDBJ databases">
        <authorList>
            <person name="Stapleton M."/>
            <person name="Brokstein P."/>
            <person name="Hong L."/>
            <person name="Agbayani A."/>
            <person name="Carlson J."/>
            <person name="Champe M."/>
            <person name="Chavez C."/>
            <person name="Dorsett V."/>
            <person name="Dresnek D."/>
            <person name="Farfan D."/>
            <person name="Frise E."/>
            <person name="George R."/>
            <person name="Gonzalez M."/>
            <person name="Guarin H."/>
            <person name="Kronmiller B."/>
            <person name="Li P."/>
            <person name="Liao G."/>
            <person name="Miranda A."/>
            <person name="Mungall C.J."/>
            <person name="Nunoo J."/>
            <person name="Pacleb J."/>
            <person name="Paragas V."/>
            <person name="Park S."/>
            <person name="Patel S."/>
            <person name="Phouanenavong S."/>
            <person name="Wan K."/>
            <person name="Yu C."/>
            <person name="Lewis S.E."/>
            <person name="Rubin G.M."/>
            <person name="Celniker S."/>
        </authorList>
    </citation>
    <scope>NUCLEOTIDE SEQUENCE [LARGE SCALE MRNA] (ISOFORMS A AND H)</scope>
    <source>
        <strain evidence="12">Berkeley</strain>
        <tissue>Head</tissue>
    </source>
</reference>
<reference key="4">
    <citation type="journal article" date="1993" name="J. Neurosci.">
        <title>Identification and characterization of Drosophila genes for synaptic vesicle proteins.</title>
        <authorList>
            <person name="DiAntonio A."/>
            <person name="Burgess R.W."/>
            <person name="Chin A.C."/>
            <person name="Deitcher D.L."/>
            <person name="Scheller R.H."/>
            <person name="Schwarz T.L."/>
        </authorList>
    </citation>
    <scope>TISSUE SPECIFICITY</scope>
    <scope>DEVELOPMENTAL STAGE</scope>
</reference>
<reference key="5">
    <citation type="journal article" date="1998" name="J. Neurosci.">
        <title>Distinct requirements for evoked and spontaneous release of neurotransmitter are revealed by mutations in the Drosophila gene neuronal-synaptobrevin.</title>
        <authorList>
            <person name="Deitcher D.L."/>
            <person name="Ueda A."/>
            <person name="Stewart B.A."/>
            <person name="Burgess R.W."/>
            <person name="Kidokoro Y."/>
            <person name="Schwarz T.L."/>
        </authorList>
    </citation>
    <scope>FUNCTION</scope>
    <scope>SUBCELLULAR LOCATION</scope>
    <scope>DISRUPTION PHENOTYPE</scope>
</reference>
<reference key="6">
    <citation type="journal article" date="1999" name="J. Neurosci.">
        <title>Neuropil pattern formation and regulation of cell adhesion molecules in Drosophila optic lobe development depend on synaptobrevin.</title>
        <authorList>
            <person name="Hiesinger P.R."/>
            <person name="Reiter C."/>
            <person name="Schau H."/>
            <person name="Fischbach K.F."/>
        </authorList>
    </citation>
    <scope>DISRUPTION PHENOTYPE</scope>
</reference>
<reference key="7">
    <citation type="journal article" date="2002" name="Proc. Natl. Acad. Sci. U.S.A.">
        <title>Members of the synaptobrevin/vesicle-associated membrane protein (VAMP) family in Drosophila are functionally interchangeable in vivo for neurotransmitter release and cell viability.</title>
        <authorList>
            <person name="Bhattacharya S."/>
            <person name="Stewart B.A."/>
            <person name="Niemeyer B.A."/>
            <person name="Burgess R.W."/>
            <person name="McCabe B.D."/>
            <person name="Lin P."/>
            <person name="Boulianne G."/>
            <person name="O'Kane C.J."/>
            <person name="Schwarz T.L."/>
        </authorList>
    </citation>
    <scope>FUNCTION</scope>
    <scope>SUBUNIT</scope>
</reference>
<reference key="8">
    <citation type="journal article" date="2012" name="J. Cell Biol.">
        <title>The synaptic vesicle SNARE neuronal Synaptobrevin promotes endolysosomal degradation and prevents neurodegeneration.</title>
        <authorList>
            <person name="Haberman A."/>
            <person name="Williamson W.R."/>
            <person name="Epstein D."/>
            <person name="Wang D."/>
            <person name="Rina S."/>
            <person name="Meinertzhagen I.A."/>
            <person name="Hiesinger P.R."/>
        </authorList>
    </citation>
    <scope>FUNCTION</scope>
    <scope>SUBCELLULAR LOCATION</scope>
    <scope>DISRUPTION PHENOTYPE</scope>
</reference>
<accession>Q9W0C1</accession>
<accession>C6TP85</accession>
<accession>M9PDW0</accession>
<accession>M9PE71</accession>
<accession>Q86BQ0</accession>
<accession>Q9W0C2</accession>
<feature type="chain" id="PRO_0000456041" description="Neuronal synaptobrevin">
    <location>
        <begin position="1"/>
        <end position="183"/>
    </location>
</feature>
<feature type="topological domain" description="Cytoplasmic" evidence="10">
    <location>
        <begin position="1"/>
        <end position="106"/>
    </location>
</feature>
<feature type="transmembrane region" description="Helical" evidence="1">
    <location>
        <begin position="107"/>
        <end position="127"/>
    </location>
</feature>
<feature type="topological domain" description="Vesicular" evidence="10">
    <location>
        <begin position="128"/>
        <end position="183"/>
    </location>
</feature>
<feature type="domain" description="v-SNARE coiled-coil homology" evidence="2">
    <location>
        <begin position="41"/>
        <end position="101"/>
    </location>
</feature>
<feature type="region of interest" description="Disordered" evidence="3">
    <location>
        <begin position="1"/>
        <end position="32"/>
    </location>
</feature>
<feature type="region of interest" description="Disordered" evidence="3">
    <location>
        <begin position="135"/>
        <end position="183"/>
    </location>
</feature>
<feature type="compositionally biased region" description="Low complexity" evidence="3">
    <location>
        <begin position="1"/>
        <end position="17"/>
    </location>
</feature>
<feature type="compositionally biased region" description="Gly residues" evidence="3">
    <location>
        <begin position="18"/>
        <end position="27"/>
    </location>
</feature>
<feature type="compositionally biased region" description="Pro residues" evidence="3">
    <location>
        <begin position="141"/>
        <end position="151"/>
    </location>
</feature>
<feature type="compositionally biased region" description="Gly residues" evidence="3">
    <location>
        <begin position="165"/>
        <end position="183"/>
    </location>
</feature>
<feature type="splice variant" id="VSP_061565" description="In isoform E and isoform H.">
    <original>M</original>
    <variation>MGKKDKNKEQ</variation>
    <location>
        <position position="1"/>
    </location>
</feature>
<feature type="splice variant" id="VSP_061566" description="In isoform J.">
    <original>NKLGLIGGEQPPQYQYPPQYMQP</original>
    <variation>KPYMSDDNAAPQPPALQQQVAPASATAPDSA</variation>
    <location>
        <begin position="122"/>
        <end position="144"/>
    </location>
</feature>
<feature type="splice variant" id="VSP_061567" description="In isoform H.">
    <original>NKLGL</original>
    <variation>KKDEE</variation>
    <location>
        <begin position="122"/>
        <end position="126"/>
    </location>
</feature>
<feature type="splice variant" id="VSP_061568" description="In isoform K.">
    <original>NKLG</original>
    <variation>SNFM</variation>
    <location>
        <begin position="122"/>
        <end position="125"/>
    </location>
</feature>
<feature type="splice variant" id="VSP_061569" description="In isoform K.">
    <location>
        <begin position="126"/>
        <end position="183"/>
    </location>
</feature>
<feature type="splice variant" id="VSP_061570" description="In isoform H.">
    <location>
        <begin position="127"/>
        <end position="183"/>
    </location>
</feature>
<feature type="splice variant" id="VSP_061571" description="In isoform J.">
    <original>QPAGGQSSLVDAAGAGDGAGAGGSAGAGDHGGV</original>
    <variation>LLQQQEQQLQPHHHTQNLKSEPPTLEKPLAEKLTDHPQSPSNEVATGQ</variation>
    <location>
        <begin position="151"/>
        <end position="183"/>
    </location>
</feature>
<evidence type="ECO:0000255" key="1"/>
<evidence type="ECO:0000255" key="2">
    <source>
        <dbReference type="PROSITE-ProRule" id="PRU00290"/>
    </source>
</evidence>
<evidence type="ECO:0000256" key="3">
    <source>
        <dbReference type="SAM" id="MobiDB-lite"/>
    </source>
</evidence>
<evidence type="ECO:0000269" key="4">
    <source>
    </source>
</evidence>
<evidence type="ECO:0000269" key="5">
    <source>
    </source>
</evidence>
<evidence type="ECO:0000269" key="6">
    <source>
    </source>
</evidence>
<evidence type="ECO:0000269" key="7">
    <source>
    </source>
</evidence>
<evidence type="ECO:0000269" key="8">
    <source>
    </source>
</evidence>
<evidence type="ECO:0000303" key="9">
    <source>
    </source>
</evidence>
<evidence type="ECO:0000305" key="10"/>
<evidence type="ECO:0000305" key="11">
    <source>
    </source>
</evidence>
<evidence type="ECO:0000312" key="12">
    <source>
        <dbReference type="EMBL" id="AAL39190.1"/>
    </source>
</evidence>
<evidence type="ECO:0000312" key="13">
    <source>
        <dbReference type="FlyBase" id="FBgn0013342"/>
    </source>
</evidence>
<dbReference type="EMBL" id="AE014296">
    <property type="protein sequence ID" value="AAF47529.1"/>
    <property type="molecule type" value="Genomic_DNA"/>
</dbReference>
<dbReference type="EMBL" id="AE014296">
    <property type="protein sequence ID" value="AAN11493.1"/>
    <property type="molecule type" value="Genomic_DNA"/>
</dbReference>
<dbReference type="EMBL" id="AE014296">
    <property type="protein sequence ID" value="AGB93964.1"/>
    <property type="molecule type" value="Genomic_DNA"/>
</dbReference>
<dbReference type="EMBL" id="AE014296">
    <property type="protein sequence ID" value="AAF47530.1"/>
    <property type="molecule type" value="Genomic_DNA"/>
</dbReference>
<dbReference type="EMBL" id="AE014296">
    <property type="protein sequence ID" value="AAS64932.1"/>
    <property type="molecule type" value="Genomic_DNA"/>
</dbReference>
<dbReference type="EMBL" id="AE014296">
    <property type="protein sequence ID" value="AAN11494.2"/>
    <property type="molecule type" value="Genomic_DNA"/>
</dbReference>
<dbReference type="EMBL" id="AE014296">
    <property type="protein sequence ID" value="AFH04218.1"/>
    <property type="molecule type" value="Genomic_DNA"/>
</dbReference>
<dbReference type="EMBL" id="AE014296">
    <property type="protein sequence ID" value="AGB93965.1"/>
    <property type="molecule type" value="Genomic_DNA"/>
</dbReference>
<dbReference type="EMBL" id="AY069045">
    <property type="protein sequence ID" value="AAL39190.1"/>
    <property type="molecule type" value="mRNA"/>
</dbReference>
<dbReference type="EMBL" id="BT099571">
    <property type="protein sequence ID" value="ACU43533.1"/>
    <property type="molecule type" value="mRNA"/>
</dbReference>
<dbReference type="RefSeq" id="NP_001246547.1">
    <molecule id="Q9W0C1-4"/>
    <property type="nucleotide sequence ID" value="NM_001259618.2"/>
</dbReference>
<dbReference type="RefSeq" id="NP_001261269.1">
    <molecule id="Q9W0C1-2"/>
    <property type="nucleotide sequence ID" value="NM_001274340.1"/>
</dbReference>
<dbReference type="RefSeq" id="NP_001261270.1">
    <molecule id="Q9W0C1-5"/>
    <property type="nucleotide sequence ID" value="NM_001274341.1"/>
</dbReference>
<dbReference type="RefSeq" id="NP_477058.1">
    <molecule id="Q9W0C1-1"/>
    <property type="nucleotide sequence ID" value="NM_057710.6"/>
</dbReference>
<dbReference type="RefSeq" id="NP_728644.1">
    <molecule id="Q9W0C1-1"/>
    <property type="nucleotide sequence ID" value="NM_167904.3"/>
</dbReference>
<dbReference type="RefSeq" id="NP_728645.1">
    <molecule id="Q9W0C1-3"/>
    <property type="nucleotide sequence ID" value="NM_167905.4"/>
</dbReference>
<dbReference type="RefSeq" id="NP_728646.2">
    <molecule id="Q9W0C1-4"/>
    <property type="nucleotide sequence ID" value="NM_167906.3"/>
</dbReference>
<dbReference type="RefSeq" id="NP_995956.1">
    <molecule id="Q9W0C1-3"/>
    <property type="nucleotide sequence ID" value="NM_206234.4"/>
</dbReference>
<dbReference type="SMR" id="Q9W0C1"/>
<dbReference type="FunCoup" id="Q9W0C1">
    <property type="interactions" value="29"/>
</dbReference>
<dbReference type="IntAct" id="Q9W0C1">
    <property type="interactions" value="7"/>
</dbReference>
<dbReference type="STRING" id="7227.FBpp0303878"/>
<dbReference type="PaxDb" id="7227-FBpp0303878"/>
<dbReference type="DNASU" id="38196"/>
<dbReference type="EnsemblMetazoa" id="FBtr0072815">
    <molecule id="Q9W0C1-1"/>
    <property type="protein sequence ID" value="FBpp0072697"/>
    <property type="gene ID" value="FBgn0013342"/>
</dbReference>
<dbReference type="EnsemblMetazoa" id="FBtr0072819">
    <molecule id="Q9W0C1-3"/>
    <property type="protein sequence ID" value="FBpp0089251"/>
    <property type="gene ID" value="FBgn0013342"/>
</dbReference>
<dbReference type="EnsemblMetazoa" id="FBtr0300893">
    <molecule id="Q9W0C1-1"/>
    <property type="protein sequence ID" value="FBpp0290115"/>
    <property type="gene ID" value="FBgn0013342"/>
</dbReference>
<dbReference type="EnsemblMetazoa" id="FBtr0300894">
    <molecule id="Q9W0C1-3"/>
    <property type="protein sequence ID" value="FBpp0290116"/>
    <property type="gene ID" value="FBgn0013342"/>
</dbReference>
<dbReference type="EnsemblMetazoa" id="FBtr0302310">
    <molecule id="Q9W0C1-4"/>
    <property type="protein sequence ID" value="FBpp0291516"/>
    <property type="gene ID" value="FBgn0013342"/>
</dbReference>
<dbReference type="EnsemblMetazoa" id="FBtr0306578">
    <molecule id="Q9W0C1-4"/>
    <property type="protein sequence ID" value="FBpp0297533"/>
    <property type="gene ID" value="FBgn0013342"/>
</dbReference>
<dbReference type="EnsemblMetazoa" id="FBtr0331461">
    <molecule id="Q9W0C1-2"/>
    <property type="protein sequence ID" value="FBpp0303878"/>
    <property type="gene ID" value="FBgn0013342"/>
</dbReference>
<dbReference type="EnsemblMetazoa" id="FBtr0331462">
    <molecule id="Q9W0C1-5"/>
    <property type="protein sequence ID" value="FBpp0303879"/>
    <property type="gene ID" value="FBgn0013342"/>
</dbReference>
<dbReference type="GeneID" id="38196"/>
<dbReference type="KEGG" id="dme:Dmel_CG17248"/>
<dbReference type="UCSC" id="CG17248-RA">
    <molecule id="Q9W0C1-1"/>
    <property type="organism name" value="d. melanogaster"/>
</dbReference>
<dbReference type="UCSC" id="CG17248-RB">
    <property type="organism name" value="d. melanogaster"/>
</dbReference>
<dbReference type="UCSC" id="CG17248-RD">
    <property type="organism name" value="d. melanogaster"/>
</dbReference>
<dbReference type="AGR" id="FB:FBgn0013342"/>
<dbReference type="CTD" id="38196"/>
<dbReference type="FlyBase" id="FBgn0013342">
    <property type="gene designation" value="nSyb"/>
</dbReference>
<dbReference type="VEuPathDB" id="VectorBase:FBgn0013342"/>
<dbReference type="eggNOG" id="KOG0860">
    <property type="taxonomic scope" value="Eukaryota"/>
</dbReference>
<dbReference type="GeneTree" id="ENSGT00940000164382"/>
<dbReference type="HOGENOM" id="CLU_1333168_0_0_1"/>
<dbReference type="OMA" id="NHKQINL"/>
<dbReference type="OrthoDB" id="10042941at2759"/>
<dbReference type="Reactome" id="R-DME-181429">
    <property type="pathway name" value="Serotonin Neurotransmitter Release Cycle"/>
</dbReference>
<dbReference type="Reactome" id="R-DME-181430">
    <property type="pathway name" value="Norepinephrine Neurotransmitter Release Cycle"/>
</dbReference>
<dbReference type="Reactome" id="R-DME-199992">
    <property type="pathway name" value="trans-Golgi Network Vesicle Budding"/>
</dbReference>
<dbReference type="Reactome" id="R-DME-210500">
    <property type="pathway name" value="Glutamate Neurotransmitter Release Cycle"/>
</dbReference>
<dbReference type="Reactome" id="R-DME-212676">
    <property type="pathway name" value="Dopamine Neurotransmitter Release Cycle"/>
</dbReference>
<dbReference type="Reactome" id="R-DME-264642">
    <property type="pathway name" value="Acetylcholine Neurotransmitter Release Cycle"/>
</dbReference>
<dbReference type="Reactome" id="R-DME-432720">
    <property type="pathway name" value="Lysosome Vesicle Biogenesis"/>
</dbReference>
<dbReference type="Reactome" id="R-DME-432722">
    <property type="pathway name" value="Golgi Associated Vesicle Biogenesis"/>
</dbReference>
<dbReference type="Reactome" id="R-DME-449836">
    <property type="pathway name" value="Other interleukin signaling"/>
</dbReference>
<dbReference type="Reactome" id="R-DME-6798695">
    <property type="pathway name" value="Neutrophil degranulation"/>
</dbReference>
<dbReference type="Reactome" id="R-DME-6811440">
    <property type="pathway name" value="Retrograde transport at the Trans-Golgi-Network"/>
</dbReference>
<dbReference type="Reactome" id="R-DME-8856825">
    <property type="pathway name" value="Cargo recognition for clathrin-mediated endocytosis"/>
</dbReference>
<dbReference type="Reactome" id="R-DME-8856828">
    <property type="pathway name" value="Clathrin-mediated endocytosis"/>
</dbReference>
<dbReference type="Reactome" id="R-DME-888590">
    <property type="pathway name" value="GABA synthesis, release, reuptake and degradation"/>
</dbReference>
<dbReference type="Reactome" id="R-DME-8980692">
    <property type="pathway name" value="RHOA GTPase cycle"/>
</dbReference>
<dbReference type="Reactome" id="R-DME-9013026">
    <property type="pathway name" value="RHOB GTPase cycle"/>
</dbReference>
<dbReference type="Reactome" id="R-DME-9013149">
    <property type="pathway name" value="RAC1 GTPase cycle"/>
</dbReference>
<dbReference type="Reactome" id="R-DME-9013404">
    <property type="pathway name" value="RAC2 GTPase cycle"/>
</dbReference>
<dbReference type="Reactome" id="R-DME-9013405">
    <property type="pathway name" value="RHOD GTPase cycle"/>
</dbReference>
<dbReference type="Reactome" id="R-DME-9013406">
    <property type="pathway name" value="RHOQ GTPase cycle"/>
</dbReference>
<dbReference type="Reactome" id="R-DME-9013407">
    <property type="pathway name" value="RHOH GTPase cycle"/>
</dbReference>
<dbReference type="Reactome" id="R-DME-9013408">
    <property type="pathway name" value="RHOG GTPase cycle"/>
</dbReference>
<dbReference type="Reactome" id="R-DME-9013423">
    <property type="pathway name" value="RAC3 GTPase cycle"/>
</dbReference>
<dbReference type="Reactome" id="R-DME-9035034">
    <property type="pathway name" value="RHOF GTPase cycle"/>
</dbReference>
<dbReference type="Reactome" id="R-DME-9609523">
    <property type="pathway name" value="Insertion of tail-anchored proteins into the endoplasmic reticulum membrane"/>
</dbReference>
<dbReference type="BioGRID-ORCS" id="38196">
    <property type="hits" value="0 hits in 3 CRISPR screens"/>
</dbReference>
<dbReference type="ChiTaRS" id="nSyb">
    <property type="organism name" value="fly"/>
</dbReference>
<dbReference type="GenomeRNAi" id="38196"/>
<dbReference type="PRO" id="PR:Q9W0C1"/>
<dbReference type="Proteomes" id="UP000000803">
    <property type="component" value="Chromosome 3L"/>
</dbReference>
<dbReference type="Bgee" id="FBgn0013342">
    <property type="expression patterns" value="Expressed in transmedullary neuron Tm5c (Drosophila) in brain and 215 other cell types or tissues"/>
</dbReference>
<dbReference type="ExpressionAtlas" id="Q9W0C1">
    <property type="expression patterns" value="baseline and differential"/>
</dbReference>
<dbReference type="GO" id="GO:0031901">
    <property type="term" value="C:early endosome membrane"/>
    <property type="evidence" value="ECO:0000314"/>
    <property type="project" value="UniProtKB"/>
</dbReference>
<dbReference type="GO" id="GO:0005886">
    <property type="term" value="C:plasma membrane"/>
    <property type="evidence" value="ECO:0000314"/>
    <property type="project" value="FlyBase"/>
</dbReference>
<dbReference type="GO" id="GO:0031201">
    <property type="term" value="C:SNARE complex"/>
    <property type="evidence" value="ECO:0000314"/>
    <property type="project" value="FlyBase"/>
</dbReference>
<dbReference type="GO" id="GO:0045202">
    <property type="term" value="C:synapse"/>
    <property type="evidence" value="ECO:0000314"/>
    <property type="project" value="UniProtKB"/>
</dbReference>
<dbReference type="GO" id="GO:0008021">
    <property type="term" value="C:synaptic vesicle"/>
    <property type="evidence" value="ECO:0000314"/>
    <property type="project" value="FlyBase"/>
</dbReference>
<dbReference type="GO" id="GO:0030672">
    <property type="term" value="C:synaptic vesicle membrane"/>
    <property type="evidence" value="ECO:0000314"/>
    <property type="project" value="UniProtKB"/>
</dbReference>
<dbReference type="GO" id="GO:0043195">
    <property type="term" value="C:terminal bouton"/>
    <property type="evidence" value="ECO:0000314"/>
    <property type="project" value="FlyBase"/>
</dbReference>
<dbReference type="GO" id="GO:0005484">
    <property type="term" value="F:SNAP receptor activity"/>
    <property type="evidence" value="ECO:0000314"/>
    <property type="project" value="FlyBase"/>
</dbReference>
<dbReference type="GO" id="GO:0000149">
    <property type="term" value="F:SNARE binding"/>
    <property type="evidence" value="ECO:0000314"/>
    <property type="project" value="UniProtKB"/>
</dbReference>
<dbReference type="GO" id="GO:0019905">
    <property type="term" value="F:syntaxin binding"/>
    <property type="evidence" value="ECO:0000318"/>
    <property type="project" value="GO_Central"/>
</dbReference>
<dbReference type="GO" id="GO:0007269">
    <property type="term" value="P:neurotransmitter secretion"/>
    <property type="evidence" value="ECO:0000303"/>
    <property type="project" value="FlyBase"/>
</dbReference>
<dbReference type="GO" id="GO:0031340">
    <property type="term" value="P:positive regulation of vesicle fusion"/>
    <property type="evidence" value="ECO:0000314"/>
    <property type="project" value="UniProtKB"/>
</dbReference>
<dbReference type="GO" id="GO:0099536">
    <property type="term" value="P:synaptic signaling"/>
    <property type="evidence" value="ECO:0000315"/>
    <property type="project" value="UniProtKB"/>
</dbReference>
<dbReference type="GO" id="GO:0016081">
    <property type="term" value="P:synaptic vesicle docking"/>
    <property type="evidence" value="ECO:0000250"/>
    <property type="project" value="FlyBase"/>
</dbReference>
<dbReference type="GO" id="GO:0016079">
    <property type="term" value="P:synaptic vesicle exocytosis"/>
    <property type="evidence" value="ECO:0000315"/>
    <property type="project" value="UniProtKB"/>
</dbReference>
<dbReference type="GO" id="GO:0006906">
    <property type="term" value="P:vesicle fusion"/>
    <property type="evidence" value="ECO:0000314"/>
    <property type="project" value="UniProtKB"/>
</dbReference>
<dbReference type="GO" id="GO:0016192">
    <property type="term" value="P:vesicle-mediated transport"/>
    <property type="evidence" value="ECO:0000250"/>
    <property type="project" value="FlyBase"/>
</dbReference>
<dbReference type="CDD" id="cd15870">
    <property type="entry name" value="R-SNARE_VAMP2"/>
    <property type="match status" value="1"/>
</dbReference>
<dbReference type="FunFam" id="1.20.5.110:FF:000013">
    <property type="entry name" value="Vesicle-associated membrane protein 2"/>
    <property type="match status" value="1"/>
</dbReference>
<dbReference type="Gene3D" id="1.20.5.110">
    <property type="match status" value="1"/>
</dbReference>
<dbReference type="InterPro" id="IPR001388">
    <property type="entry name" value="Synaptobrevin-like"/>
</dbReference>
<dbReference type="InterPro" id="IPR016444">
    <property type="entry name" value="Synaptobrevin/VAMP"/>
</dbReference>
<dbReference type="InterPro" id="IPR042855">
    <property type="entry name" value="V_SNARE_CC"/>
</dbReference>
<dbReference type="PANTHER" id="PTHR45701">
    <property type="entry name" value="SYNAPTOBREVIN FAMILY MEMBER"/>
    <property type="match status" value="1"/>
</dbReference>
<dbReference type="Pfam" id="PF00957">
    <property type="entry name" value="Synaptobrevin"/>
    <property type="match status" value="1"/>
</dbReference>
<dbReference type="PRINTS" id="PR00219">
    <property type="entry name" value="SYNAPTOBREVN"/>
</dbReference>
<dbReference type="SUPFAM" id="SSF58038">
    <property type="entry name" value="SNARE fusion complex"/>
    <property type="match status" value="1"/>
</dbReference>
<dbReference type="PROSITE" id="PS00417">
    <property type="entry name" value="SYNAPTOBREVIN"/>
    <property type="match status" value="1"/>
</dbReference>
<dbReference type="PROSITE" id="PS50892">
    <property type="entry name" value="V_SNARE"/>
    <property type="match status" value="1"/>
</dbReference>
<sequence length="183" mass="18776">MADAAPAGDAPPNAGAPAGEGGDGEIVGGPHNPQQIAAQKRLQQTQAQVDEVVDIMRTNVEKVLERDSKLSELDDRADALQQGASQFEQQAGKLKRKFWLQNLKMMIIMGVIGLVVVGIIANKLGLIGGEQPPQYQYPPQYMQPPPPPPQQPAGGQSSLVDAAGAGDGAGAGGSAGAGDHGGV</sequence>
<protein>
    <recommendedName>
        <fullName evidence="9">Neuronal synaptobrevin</fullName>
        <shortName evidence="9">n-syb</shortName>
    </recommendedName>
</protein>
<gene>
    <name evidence="9 13" type="primary">nSyb</name>
    <name evidence="13" type="ORF">CG17248</name>
</gene>
<keyword id="KW-0025">Alternative splicing</keyword>
<keyword id="KW-0968">Cytoplasmic vesicle</keyword>
<keyword id="KW-0967">Endosome</keyword>
<keyword id="KW-0472">Membrane</keyword>
<keyword id="KW-1185">Reference proteome</keyword>
<keyword id="KW-0770">Synapse</keyword>
<keyword id="KW-0812">Transmembrane</keyword>
<keyword id="KW-1133">Transmembrane helix</keyword>
<proteinExistence type="evidence at protein level"/>